<comment type="function">
    <text evidence="1">Catalyzes the desulfonation of aliphatic sulfonates.</text>
</comment>
<comment type="catalytic activity">
    <reaction evidence="1">
        <text>an alkanesulfonate + FMNH2 + O2 = an aldehyde + FMN + sulfite + H2O + 2 H(+)</text>
        <dbReference type="Rhea" id="RHEA:23064"/>
        <dbReference type="ChEBI" id="CHEBI:15377"/>
        <dbReference type="ChEBI" id="CHEBI:15378"/>
        <dbReference type="ChEBI" id="CHEBI:15379"/>
        <dbReference type="ChEBI" id="CHEBI:17359"/>
        <dbReference type="ChEBI" id="CHEBI:17478"/>
        <dbReference type="ChEBI" id="CHEBI:57618"/>
        <dbReference type="ChEBI" id="CHEBI:58210"/>
        <dbReference type="ChEBI" id="CHEBI:134249"/>
        <dbReference type="EC" id="1.14.14.5"/>
    </reaction>
</comment>
<comment type="subunit">
    <text evidence="1">Homotetramer.</text>
</comment>
<comment type="miscellaneous">
    <text evidence="1">FMNH(2) which is absolutely required for this enzymatic reaction, is provided by SsuE.</text>
</comment>
<comment type="similarity">
    <text evidence="1">Belongs to the SsuD family.</text>
</comment>
<keyword id="KW-0285">Flavoprotein</keyword>
<keyword id="KW-0288">FMN</keyword>
<keyword id="KW-0503">Monooxygenase</keyword>
<keyword id="KW-0560">Oxidoreductase</keyword>
<protein>
    <recommendedName>
        <fullName evidence="1">Alkanesulfonate monooxygenase</fullName>
        <ecNumber evidence="1">1.14.14.5</ecNumber>
    </recommendedName>
    <alternativeName>
        <fullName evidence="1">FMNH2-dependent aliphatic sulfonate monooxygenase</fullName>
    </alternativeName>
</protein>
<gene>
    <name evidence="1" type="primary">ssuD</name>
    <name type="ordered locus">ECUMN_1131</name>
</gene>
<proteinExistence type="inferred from homology"/>
<accession>B7N3A4</accession>
<evidence type="ECO:0000255" key="1">
    <source>
        <dbReference type="HAMAP-Rule" id="MF_01229"/>
    </source>
</evidence>
<sequence length="381" mass="41761">MSLNMFWFLPTHGDGHYLGTEEGSRPVDHGYLQQIAQAADRLGYTGVLIPTGRSCEDAWLVAASMIPVTQRLKFLVALRPSVTSPTVAARQAATLDRLSNGRALFNLVTGSDPQELAGDGVFLDHRERYEASAEFTQVWRRLLLGETVNFNGKHIHVRGAKLLFPPIQQPYPPLYFGGSSDVAQELAAEQVDFYLTWGEPPELVKEKIEQVRAKAAAHGRKIRFGIRLHVIVRETSDEAWQAAERLISHLDDETIAKAQAAFARTDSVGQQRMAALHNGKRDNLEISPNLWAGVGLVRGGAGTALVGDGPTVAARINEYAALGIDSFVLSGYPHLEEAYRVGELLFPHLDVAIPEIPQPQPLNPQGEAVANEFIPRKVAQS</sequence>
<feature type="chain" id="PRO_1000139621" description="Alkanesulfonate monooxygenase">
    <location>
        <begin position="1"/>
        <end position="381"/>
    </location>
</feature>
<name>SSUD_ECOLU</name>
<dbReference type="EC" id="1.14.14.5" evidence="1"/>
<dbReference type="EMBL" id="CU928163">
    <property type="protein sequence ID" value="CAR12340.1"/>
    <property type="molecule type" value="Genomic_DNA"/>
</dbReference>
<dbReference type="RefSeq" id="WP_000055959.1">
    <property type="nucleotide sequence ID" value="NC_011751.1"/>
</dbReference>
<dbReference type="RefSeq" id="YP_002411884.1">
    <property type="nucleotide sequence ID" value="NC_011751.1"/>
</dbReference>
<dbReference type="SMR" id="B7N3A4"/>
<dbReference type="STRING" id="585056.ECUMN_1131"/>
<dbReference type="KEGG" id="eum:ECUMN_1131"/>
<dbReference type="PATRIC" id="fig|585056.7.peg.1328"/>
<dbReference type="HOGENOM" id="CLU_027853_1_0_6"/>
<dbReference type="Proteomes" id="UP000007097">
    <property type="component" value="Chromosome"/>
</dbReference>
<dbReference type="GO" id="GO:0008726">
    <property type="term" value="F:alkanesulfonate monooxygenase activity"/>
    <property type="evidence" value="ECO:0007669"/>
    <property type="project" value="UniProtKB-UniRule"/>
</dbReference>
<dbReference type="GO" id="GO:0046306">
    <property type="term" value="P:alkanesulfonate catabolic process"/>
    <property type="evidence" value="ECO:0007669"/>
    <property type="project" value="TreeGrafter"/>
</dbReference>
<dbReference type="CDD" id="cd01094">
    <property type="entry name" value="Alkanesulfonate_monoxygenase"/>
    <property type="match status" value="1"/>
</dbReference>
<dbReference type="FunFam" id="3.20.20.30:FF:000001">
    <property type="entry name" value="Alkanesulfonate monooxygenase"/>
    <property type="match status" value="1"/>
</dbReference>
<dbReference type="Gene3D" id="3.20.20.30">
    <property type="entry name" value="Luciferase-like domain"/>
    <property type="match status" value="1"/>
</dbReference>
<dbReference type="HAMAP" id="MF_01229">
    <property type="entry name" value="Alkanesulf_monooxygen"/>
    <property type="match status" value="1"/>
</dbReference>
<dbReference type="InterPro" id="IPR019911">
    <property type="entry name" value="Alkanesulphonate_mOase_FMN-dep"/>
</dbReference>
<dbReference type="InterPro" id="IPR011251">
    <property type="entry name" value="Luciferase-like_dom"/>
</dbReference>
<dbReference type="InterPro" id="IPR036661">
    <property type="entry name" value="Luciferase-like_sf"/>
</dbReference>
<dbReference type="InterPro" id="IPR050172">
    <property type="entry name" value="SsuD_RutA_monooxygenase"/>
</dbReference>
<dbReference type="NCBIfam" id="TIGR03565">
    <property type="entry name" value="alk_sulf_monoox"/>
    <property type="match status" value="1"/>
</dbReference>
<dbReference type="NCBIfam" id="NF001939">
    <property type="entry name" value="PRK00719.1"/>
    <property type="match status" value="1"/>
</dbReference>
<dbReference type="PANTHER" id="PTHR42847">
    <property type="entry name" value="ALKANESULFONATE MONOOXYGENASE"/>
    <property type="match status" value="1"/>
</dbReference>
<dbReference type="PANTHER" id="PTHR42847:SF4">
    <property type="entry name" value="ALKANESULFONATE MONOOXYGENASE-RELATED"/>
    <property type="match status" value="1"/>
</dbReference>
<dbReference type="Pfam" id="PF00296">
    <property type="entry name" value="Bac_luciferase"/>
    <property type="match status" value="1"/>
</dbReference>
<dbReference type="SUPFAM" id="SSF51679">
    <property type="entry name" value="Bacterial luciferase-like"/>
    <property type="match status" value="1"/>
</dbReference>
<organism>
    <name type="scientific">Escherichia coli O17:K52:H18 (strain UMN026 / ExPEC)</name>
    <dbReference type="NCBI Taxonomy" id="585056"/>
    <lineage>
        <taxon>Bacteria</taxon>
        <taxon>Pseudomonadati</taxon>
        <taxon>Pseudomonadota</taxon>
        <taxon>Gammaproteobacteria</taxon>
        <taxon>Enterobacterales</taxon>
        <taxon>Enterobacteriaceae</taxon>
        <taxon>Escherichia</taxon>
    </lineage>
</organism>
<reference key="1">
    <citation type="journal article" date="2009" name="PLoS Genet.">
        <title>Organised genome dynamics in the Escherichia coli species results in highly diverse adaptive paths.</title>
        <authorList>
            <person name="Touchon M."/>
            <person name="Hoede C."/>
            <person name="Tenaillon O."/>
            <person name="Barbe V."/>
            <person name="Baeriswyl S."/>
            <person name="Bidet P."/>
            <person name="Bingen E."/>
            <person name="Bonacorsi S."/>
            <person name="Bouchier C."/>
            <person name="Bouvet O."/>
            <person name="Calteau A."/>
            <person name="Chiapello H."/>
            <person name="Clermont O."/>
            <person name="Cruveiller S."/>
            <person name="Danchin A."/>
            <person name="Diard M."/>
            <person name="Dossat C."/>
            <person name="Karoui M.E."/>
            <person name="Frapy E."/>
            <person name="Garry L."/>
            <person name="Ghigo J.M."/>
            <person name="Gilles A.M."/>
            <person name="Johnson J."/>
            <person name="Le Bouguenec C."/>
            <person name="Lescat M."/>
            <person name="Mangenot S."/>
            <person name="Martinez-Jehanne V."/>
            <person name="Matic I."/>
            <person name="Nassif X."/>
            <person name="Oztas S."/>
            <person name="Petit M.A."/>
            <person name="Pichon C."/>
            <person name="Rouy Z."/>
            <person name="Ruf C.S."/>
            <person name="Schneider D."/>
            <person name="Tourret J."/>
            <person name="Vacherie B."/>
            <person name="Vallenet D."/>
            <person name="Medigue C."/>
            <person name="Rocha E.P.C."/>
            <person name="Denamur E."/>
        </authorList>
    </citation>
    <scope>NUCLEOTIDE SEQUENCE [LARGE SCALE GENOMIC DNA]</scope>
    <source>
        <strain>UMN026 / ExPEC</strain>
    </source>
</reference>